<comment type="function">
    <text evidence="1">Catalyzes the formation of S-adenosylmethionine (AdoMet) from methionine and ATP. The overall synthetic reaction is composed of two sequential steps, AdoMet formation and the subsequent tripolyphosphate hydrolysis which occurs prior to release of AdoMet from the enzyme.</text>
</comment>
<comment type="catalytic activity">
    <reaction evidence="1">
        <text>L-methionine + ATP + H2O = S-adenosyl-L-methionine + phosphate + diphosphate</text>
        <dbReference type="Rhea" id="RHEA:21080"/>
        <dbReference type="ChEBI" id="CHEBI:15377"/>
        <dbReference type="ChEBI" id="CHEBI:30616"/>
        <dbReference type="ChEBI" id="CHEBI:33019"/>
        <dbReference type="ChEBI" id="CHEBI:43474"/>
        <dbReference type="ChEBI" id="CHEBI:57844"/>
        <dbReference type="ChEBI" id="CHEBI:59789"/>
        <dbReference type="EC" id="2.5.1.6"/>
    </reaction>
</comment>
<comment type="cofactor">
    <cofactor evidence="1">
        <name>Mg(2+)</name>
        <dbReference type="ChEBI" id="CHEBI:18420"/>
    </cofactor>
    <text evidence="1">Binds 2 divalent ions per subunit.</text>
</comment>
<comment type="cofactor">
    <cofactor evidence="1">
        <name>K(+)</name>
        <dbReference type="ChEBI" id="CHEBI:29103"/>
    </cofactor>
    <text evidence="1">Binds 1 potassium ion per subunit.</text>
</comment>
<comment type="pathway">
    <text evidence="1">Amino-acid biosynthesis; S-adenosyl-L-methionine biosynthesis; S-adenosyl-L-methionine from L-methionine: step 1/1.</text>
</comment>
<comment type="subunit">
    <text evidence="1">Homotetramer; dimer of dimers.</text>
</comment>
<comment type="subcellular location">
    <subcellularLocation>
        <location evidence="1">Cytoplasm</location>
    </subcellularLocation>
</comment>
<comment type="similarity">
    <text evidence="1">Belongs to the AdoMet synthase family.</text>
</comment>
<accession>Q816Q8</accession>
<feature type="chain" id="PRO_0000174485" description="S-adenosylmethionine synthase">
    <location>
        <begin position="1"/>
        <end position="399"/>
    </location>
</feature>
<feature type="region of interest" description="Flexible loop" evidence="1">
    <location>
        <begin position="101"/>
        <end position="111"/>
    </location>
</feature>
<feature type="binding site" description="in other chain" evidence="1">
    <location>
        <position position="17"/>
    </location>
    <ligand>
        <name>ATP</name>
        <dbReference type="ChEBI" id="CHEBI:30616"/>
        <note>ligand shared between two neighboring subunits</note>
    </ligand>
</feature>
<feature type="binding site" evidence="1">
    <location>
        <position position="19"/>
    </location>
    <ligand>
        <name>Mg(2+)</name>
        <dbReference type="ChEBI" id="CHEBI:18420"/>
    </ligand>
</feature>
<feature type="binding site" evidence="1">
    <location>
        <position position="45"/>
    </location>
    <ligand>
        <name>K(+)</name>
        <dbReference type="ChEBI" id="CHEBI:29103"/>
    </ligand>
</feature>
<feature type="binding site" description="in other chain" evidence="1">
    <location>
        <position position="58"/>
    </location>
    <ligand>
        <name>L-methionine</name>
        <dbReference type="ChEBI" id="CHEBI:57844"/>
        <note>ligand shared between two neighboring subunits</note>
    </ligand>
</feature>
<feature type="binding site" description="in other chain" evidence="1">
    <location>
        <position position="101"/>
    </location>
    <ligand>
        <name>L-methionine</name>
        <dbReference type="ChEBI" id="CHEBI:57844"/>
        <note>ligand shared between two neighboring subunits</note>
    </ligand>
</feature>
<feature type="binding site" description="in other chain" evidence="1">
    <location>
        <begin position="177"/>
        <end position="179"/>
    </location>
    <ligand>
        <name>ATP</name>
        <dbReference type="ChEBI" id="CHEBI:30616"/>
        <note>ligand shared between two neighboring subunits</note>
    </ligand>
</feature>
<feature type="binding site" description="in other chain" evidence="1">
    <location>
        <begin position="244"/>
        <end position="245"/>
    </location>
    <ligand>
        <name>ATP</name>
        <dbReference type="ChEBI" id="CHEBI:30616"/>
        <note>ligand shared between two neighboring subunits</note>
    </ligand>
</feature>
<feature type="binding site" evidence="1">
    <location>
        <position position="253"/>
    </location>
    <ligand>
        <name>ATP</name>
        <dbReference type="ChEBI" id="CHEBI:30616"/>
        <note>ligand shared between two neighboring subunits</note>
    </ligand>
</feature>
<feature type="binding site" evidence="1">
    <location>
        <position position="253"/>
    </location>
    <ligand>
        <name>L-methionine</name>
        <dbReference type="ChEBI" id="CHEBI:57844"/>
        <note>ligand shared between two neighboring subunits</note>
    </ligand>
</feature>
<feature type="binding site" description="in other chain" evidence="1">
    <location>
        <begin position="259"/>
        <end position="260"/>
    </location>
    <ligand>
        <name>ATP</name>
        <dbReference type="ChEBI" id="CHEBI:30616"/>
        <note>ligand shared between two neighboring subunits</note>
    </ligand>
</feature>
<feature type="binding site" evidence="1">
    <location>
        <position position="276"/>
    </location>
    <ligand>
        <name>ATP</name>
        <dbReference type="ChEBI" id="CHEBI:30616"/>
        <note>ligand shared between two neighboring subunits</note>
    </ligand>
</feature>
<feature type="binding site" evidence="1">
    <location>
        <position position="280"/>
    </location>
    <ligand>
        <name>ATP</name>
        <dbReference type="ChEBI" id="CHEBI:30616"/>
        <note>ligand shared between two neighboring subunits</note>
    </ligand>
</feature>
<feature type="binding site" description="in other chain" evidence="1">
    <location>
        <position position="284"/>
    </location>
    <ligand>
        <name>L-methionine</name>
        <dbReference type="ChEBI" id="CHEBI:57844"/>
        <note>ligand shared between two neighboring subunits</note>
    </ligand>
</feature>
<protein>
    <recommendedName>
        <fullName evidence="1">S-adenosylmethionine synthase</fullName>
        <shortName evidence="1">AdoMet synthase</shortName>
        <ecNumber evidence="1">2.5.1.6</ecNumber>
    </recommendedName>
    <alternativeName>
        <fullName evidence="1">MAT</fullName>
    </alternativeName>
    <alternativeName>
        <fullName evidence="1">Methionine adenosyltransferase</fullName>
    </alternativeName>
</protein>
<reference key="1">
    <citation type="journal article" date="2003" name="Nature">
        <title>Genome sequence of Bacillus cereus and comparative analysis with Bacillus anthracis.</title>
        <authorList>
            <person name="Ivanova N."/>
            <person name="Sorokin A."/>
            <person name="Anderson I."/>
            <person name="Galleron N."/>
            <person name="Candelon B."/>
            <person name="Kapatral V."/>
            <person name="Bhattacharyya A."/>
            <person name="Reznik G."/>
            <person name="Mikhailova N."/>
            <person name="Lapidus A."/>
            <person name="Chu L."/>
            <person name="Mazur M."/>
            <person name="Goltsman E."/>
            <person name="Larsen N."/>
            <person name="D'Souza M."/>
            <person name="Walunas T."/>
            <person name="Grechkin Y."/>
            <person name="Pusch G."/>
            <person name="Haselkorn R."/>
            <person name="Fonstein M."/>
            <person name="Ehrlich S.D."/>
            <person name="Overbeek R."/>
            <person name="Kyrpides N.C."/>
        </authorList>
    </citation>
    <scope>NUCLEOTIDE SEQUENCE [LARGE SCALE GENOMIC DNA]</scope>
    <source>
        <strain>ATCC 14579 / DSM 31 / CCUG 7414 / JCM 2152 / NBRC 15305 / NCIMB 9373 / NCTC 2599 / NRRL B-3711</strain>
    </source>
</reference>
<gene>
    <name evidence="1" type="primary">metK</name>
    <name type="ordered locus">BC_4761</name>
</gene>
<proteinExistence type="inferred from homology"/>
<organism>
    <name type="scientific">Bacillus cereus (strain ATCC 14579 / DSM 31 / CCUG 7414 / JCM 2152 / NBRC 15305 / NCIMB 9373 / NCTC 2599 / NRRL B-3711)</name>
    <dbReference type="NCBI Taxonomy" id="226900"/>
    <lineage>
        <taxon>Bacteria</taxon>
        <taxon>Bacillati</taxon>
        <taxon>Bacillota</taxon>
        <taxon>Bacilli</taxon>
        <taxon>Bacillales</taxon>
        <taxon>Bacillaceae</taxon>
        <taxon>Bacillus</taxon>
        <taxon>Bacillus cereus group</taxon>
    </lineage>
</organism>
<keyword id="KW-0067">ATP-binding</keyword>
<keyword id="KW-0963">Cytoplasm</keyword>
<keyword id="KW-0460">Magnesium</keyword>
<keyword id="KW-0479">Metal-binding</keyword>
<keyword id="KW-0547">Nucleotide-binding</keyword>
<keyword id="KW-0554">One-carbon metabolism</keyword>
<keyword id="KW-0630">Potassium</keyword>
<keyword id="KW-1185">Reference proteome</keyword>
<keyword id="KW-0808">Transferase</keyword>
<dbReference type="EC" id="2.5.1.6" evidence="1"/>
<dbReference type="EMBL" id="AE016877">
    <property type="protein sequence ID" value="AAP11666.1"/>
    <property type="molecule type" value="Genomic_DNA"/>
</dbReference>
<dbReference type="RefSeq" id="NP_834465.1">
    <property type="nucleotide sequence ID" value="NC_004722.1"/>
</dbReference>
<dbReference type="RefSeq" id="WP_000163123.1">
    <property type="nucleotide sequence ID" value="NZ_CP138336.1"/>
</dbReference>
<dbReference type="SMR" id="Q816Q8"/>
<dbReference type="STRING" id="226900.BC_4761"/>
<dbReference type="MetOSite" id="Q816Q8"/>
<dbReference type="GeneID" id="93006331"/>
<dbReference type="KEGG" id="bce:BC4761"/>
<dbReference type="PATRIC" id="fig|226900.8.peg.4924"/>
<dbReference type="HOGENOM" id="CLU_041802_1_1_9"/>
<dbReference type="OrthoDB" id="9801686at2"/>
<dbReference type="UniPathway" id="UPA00315">
    <property type="reaction ID" value="UER00080"/>
</dbReference>
<dbReference type="Proteomes" id="UP000001417">
    <property type="component" value="Chromosome"/>
</dbReference>
<dbReference type="GO" id="GO:0005829">
    <property type="term" value="C:cytosol"/>
    <property type="evidence" value="ECO:0000318"/>
    <property type="project" value="GO_Central"/>
</dbReference>
<dbReference type="GO" id="GO:0005524">
    <property type="term" value="F:ATP binding"/>
    <property type="evidence" value="ECO:0007669"/>
    <property type="project" value="UniProtKB-UniRule"/>
</dbReference>
<dbReference type="GO" id="GO:0000287">
    <property type="term" value="F:magnesium ion binding"/>
    <property type="evidence" value="ECO:0007669"/>
    <property type="project" value="UniProtKB-UniRule"/>
</dbReference>
<dbReference type="GO" id="GO:0004478">
    <property type="term" value="F:methionine adenosyltransferase activity"/>
    <property type="evidence" value="ECO:0000318"/>
    <property type="project" value="GO_Central"/>
</dbReference>
<dbReference type="GO" id="GO:0006730">
    <property type="term" value="P:one-carbon metabolic process"/>
    <property type="evidence" value="ECO:0007669"/>
    <property type="project" value="UniProtKB-KW"/>
</dbReference>
<dbReference type="GO" id="GO:0006556">
    <property type="term" value="P:S-adenosylmethionine biosynthetic process"/>
    <property type="evidence" value="ECO:0000318"/>
    <property type="project" value="GO_Central"/>
</dbReference>
<dbReference type="CDD" id="cd18079">
    <property type="entry name" value="S-AdoMet_synt"/>
    <property type="match status" value="1"/>
</dbReference>
<dbReference type="FunFam" id="3.30.300.10:FF:000003">
    <property type="entry name" value="S-adenosylmethionine synthase"/>
    <property type="match status" value="1"/>
</dbReference>
<dbReference type="FunFam" id="3.30.300.10:FF:000004">
    <property type="entry name" value="S-adenosylmethionine synthase"/>
    <property type="match status" value="1"/>
</dbReference>
<dbReference type="Gene3D" id="3.30.300.10">
    <property type="match status" value="3"/>
</dbReference>
<dbReference type="HAMAP" id="MF_00086">
    <property type="entry name" value="S_AdoMet_synth1"/>
    <property type="match status" value="1"/>
</dbReference>
<dbReference type="InterPro" id="IPR022631">
    <property type="entry name" value="ADOMET_SYNTHASE_CS"/>
</dbReference>
<dbReference type="InterPro" id="IPR022630">
    <property type="entry name" value="S-AdoMet_synt_C"/>
</dbReference>
<dbReference type="InterPro" id="IPR022629">
    <property type="entry name" value="S-AdoMet_synt_central"/>
</dbReference>
<dbReference type="InterPro" id="IPR022628">
    <property type="entry name" value="S-AdoMet_synt_N"/>
</dbReference>
<dbReference type="InterPro" id="IPR002133">
    <property type="entry name" value="S-AdoMet_synthetase"/>
</dbReference>
<dbReference type="InterPro" id="IPR022636">
    <property type="entry name" value="S-AdoMet_synthetase_sfam"/>
</dbReference>
<dbReference type="NCBIfam" id="TIGR01034">
    <property type="entry name" value="metK"/>
    <property type="match status" value="1"/>
</dbReference>
<dbReference type="PANTHER" id="PTHR11964">
    <property type="entry name" value="S-ADENOSYLMETHIONINE SYNTHETASE"/>
    <property type="match status" value="1"/>
</dbReference>
<dbReference type="Pfam" id="PF02773">
    <property type="entry name" value="S-AdoMet_synt_C"/>
    <property type="match status" value="1"/>
</dbReference>
<dbReference type="Pfam" id="PF02772">
    <property type="entry name" value="S-AdoMet_synt_M"/>
    <property type="match status" value="1"/>
</dbReference>
<dbReference type="Pfam" id="PF00438">
    <property type="entry name" value="S-AdoMet_synt_N"/>
    <property type="match status" value="1"/>
</dbReference>
<dbReference type="PIRSF" id="PIRSF000497">
    <property type="entry name" value="MAT"/>
    <property type="match status" value="1"/>
</dbReference>
<dbReference type="SUPFAM" id="SSF55973">
    <property type="entry name" value="S-adenosylmethionine synthetase"/>
    <property type="match status" value="3"/>
</dbReference>
<dbReference type="PROSITE" id="PS00376">
    <property type="entry name" value="ADOMET_SYNTHASE_1"/>
    <property type="match status" value="1"/>
</dbReference>
<dbReference type="PROSITE" id="PS00377">
    <property type="entry name" value="ADOMET_SYNTHASE_2"/>
    <property type="match status" value="1"/>
</dbReference>
<sequence length="399" mass="43282">MTKKRHLFTSESVTEGHPDKICDQISDSILDAILSKDANARVACETTVTTGLVLVAGEITTSTYVDIPKIVRETIQGIGYTRAKYGFDAETCAVLTSIDEQSADIAMGVDQALEAREGQMTDAEIEAIGAGDQGLMFGFACNETQELMPLPISLAHKLARRLTEVRKDDTLSYLRPDGKTQVTVEYDENGKPVRVDTIVISTQHHPDVTWEEIDRDLKEHVIKAVVPAELMDGETKFFINPTGRFVIGGPQGDAGLTGRKIIVDTYGGYARHGGGAFSGKDATKVDRSAAYAARYVAKNIVAAGLAEKAEVQLAYAIGVAQPVSISVDTFGTGKVSEDVLVELVRNNFDLRPAGIIKMLDLRRPIYKQTAAYGHFGRTDVDLSWERTDKAAALKEQAGL</sequence>
<name>METK_BACCR</name>
<evidence type="ECO:0000255" key="1">
    <source>
        <dbReference type="HAMAP-Rule" id="MF_00086"/>
    </source>
</evidence>